<gene>
    <name evidence="3" type="primary">FAD6</name>
</gene>
<evidence type="ECO:0000250" key="1">
    <source>
        <dbReference type="UniProtKB" id="P46312"/>
    </source>
</evidence>
<evidence type="ECO:0000269" key="2">
    <source>
    </source>
</evidence>
<evidence type="ECO:0000303" key="3">
    <source>
    </source>
</evidence>
<evidence type="ECO:0000305" key="4"/>
<keyword id="KW-0007">Acetylation</keyword>
<keyword id="KW-0150">Chloroplast</keyword>
<keyword id="KW-0903">Direct protein sequencing</keyword>
<keyword id="KW-0275">Fatty acid biosynthesis</keyword>
<keyword id="KW-0276">Fatty acid metabolism</keyword>
<keyword id="KW-0444">Lipid biosynthesis</keyword>
<keyword id="KW-0443">Lipid metabolism</keyword>
<keyword id="KW-0472">Membrane</keyword>
<keyword id="KW-0560">Oxidoreductase</keyword>
<keyword id="KW-0934">Plastid</keyword>
<keyword id="KW-1185">Reference proteome</keyword>
<keyword id="KW-0809">Transit peptide</keyword>
<organism>
    <name type="scientific">Spinacia oleracea</name>
    <name type="common">Spinach</name>
    <dbReference type="NCBI Taxonomy" id="3562"/>
    <lineage>
        <taxon>Eukaryota</taxon>
        <taxon>Viridiplantae</taxon>
        <taxon>Streptophyta</taxon>
        <taxon>Embryophyta</taxon>
        <taxon>Tracheophyta</taxon>
        <taxon>Spermatophyta</taxon>
        <taxon>Magnoliopsida</taxon>
        <taxon>eudicotyledons</taxon>
        <taxon>Gunneridae</taxon>
        <taxon>Pentapetalae</taxon>
        <taxon>Caryophyllales</taxon>
        <taxon>Chenopodiaceae</taxon>
        <taxon>Chenopodioideae</taxon>
        <taxon>Anserineae</taxon>
        <taxon>Spinacia</taxon>
    </lineage>
</organism>
<comment type="function">
    <text evidence="2">Chloroplast omega-6 fatty acid desaturase introduces the second double bond in the biosynthesis of 16:3 and 18:3 fatty acids, important constituents of plant membranes. It is thought to use ferredoxin as an electron donor and to act on fatty acids esterified to galactolipids, sulfolipids and phosphatidylglycerol.</text>
</comment>
<comment type="catalytic activity">
    <reaction evidence="2">
        <text>a (9Z)-octadecenoyl-containing glycerolipid + 2 reduced [2Fe-2S]-[ferredoxin] + O2 + 2 H(+) = a (9Z,12Z)-octadecadienoyl-containing glycerolipid + 2 oxidized [2Fe-2S]-[ferredoxin] + 2 H2O</text>
        <dbReference type="Rhea" id="RHEA:46376"/>
        <dbReference type="Rhea" id="RHEA-COMP:10000"/>
        <dbReference type="Rhea" id="RHEA-COMP:10001"/>
        <dbReference type="ChEBI" id="CHEBI:15377"/>
        <dbReference type="ChEBI" id="CHEBI:15378"/>
        <dbReference type="ChEBI" id="CHEBI:15379"/>
        <dbReference type="ChEBI" id="CHEBI:33737"/>
        <dbReference type="ChEBI" id="CHEBI:33738"/>
        <dbReference type="ChEBI" id="CHEBI:88240"/>
        <dbReference type="ChEBI" id="CHEBI:88351"/>
        <dbReference type="EC" id="1.14.19.23"/>
    </reaction>
</comment>
<comment type="pathway">
    <text>Lipid metabolism; polyunsaturated fatty acid biosynthesis.</text>
</comment>
<comment type="subcellular location">
    <subcellularLocation>
        <location evidence="2">Plastid</location>
        <location evidence="2">Chloroplast membrane</location>
        <topology evidence="4">Peripheral membrane protein</topology>
    </subcellularLocation>
</comment>
<comment type="domain">
    <text evidence="4">The histidine box domains may contain the active site and/or be involved in metal ion binding.</text>
</comment>
<comment type="similarity">
    <text evidence="4">Belongs to the fatty acid desaturase type 1 family.</text>
</comment>
<feature type="transit peptide" description="Chloroplast" evidence="2">
    <location>
        <begin position="1"/>
        <end position="65"/>
    </location>
</feature>
<feature type="chain" id="PRO_0000007126" description="Omega-6 fatty acid desaturase, chloroplastic">
    <location>
        <begin position="66"/>
        <end position="447"/>
    </location>
</feature>
<feature type="short sequence motif" description="Histidine box-1" evidence="4">
    <location>
        <begin position="171"/>
        <end position="175"/>
    </location>
</feature>
<feature type="short sequence motif" description="Histidine box-2" evidence="4">
    <location>
        <begin position="207"/>
        <end position="211"/>
    </location>
</feature>
<feature type="short sequence motif" description="Histidine box-3" evidence="4">
    <location>
        <begin position="367"/>
        <end position="371"/>
    </location>
</feature>
<feature type="modified residue" description="N-acetylvaline" evidence="1">
    <location>
        <position position="66"/>
    </location>
</feature>
<reference key="1">
    <citation type="journal article" date="1994" name="Plant Mol. Biol.">
        <title>Purification and PCR-based cDNA cloning of a plastidial n-6 desaturase.</title>
        <authorList>
            <person name="Schmidt H."/>
            <person name="Dresselhaus T."/>
            <person name="Buck F."/>
            <person name="Heinz E."/>
        </authorList>
    </citation>
    <scope>NUCLEOTIDE SEQUENCE [MRNA]</scope>
    <scope>PROTEIN SEQUENCE OF 66-78</scope>
    <scope>FUNCTION</scope>
    <scope>CATALYTIC ACTIVITY</scope>
    <scope>SUBCELLULAR LOCATION</scope>
    <source>
        <strain>cv. Subito</strain>
        <tissue>Leaf</tissue>
    </source>
</reference>
<protein>
    <recommendedName>
        <fullName evidence="3">Omega-6 fatty acid desaturase, chloroplastic</fullName>
        <ecNumber evidence="2">1.14.19.23</ecNumber>
    </recommendedName>
</protein>
<accession>P48629</accession>
<dbReference type="EC" id="1.14.19.23" evidence="2"/>
<dbReference type="EMBL" id="X78311">
    <property type="protein sequence ID" value="CAA55121.1"/>
    <property type="molecule type" value="mRNA"/>
</dbReference>
<dbReference type="PIR" id="S53309">
    <property type="entry name" value="S53309"/>
</dbReference>
<dbReference type="SMR" id="P48629"/>
<dbReference type="BioCyc" id="MetaCyc:MONOMER-14124"/>
<dbReference type="BRENDA" id="1.14.19.23">
    <property type="organism ID" value="5812"/>
</dbReference>
<dbReference type="UniPathway" id="UPA00658"/>
<dbReference type="Proteomes" id="UP001155700">
    <property type="component" value="Unplaced"/>
</dbReference>
<dbReference type="GO" id="GO:0031969">
    <property type="term" value="C:chloroplast membrane"/>
    <property type="evidence" value="ECO:0007669"/>
    <property type="project" value="UniProtKB-SubCell"/>
</dbReference>
<dbReference type="GO" id="GO:0102850">
    <property type="term" value="F:acyl-lipid (n+3)-(Z)-desaturase (ferredoxin) activity"/>
    <property type="evidence" value="ECO:0007669"/>
    <property type="project" value="UniProtKB-EC"/>
</dbReference>
<dbReference type="GO" id="GO:0045485">
    <property type="term" value="F:omega-6 fatty acid desaturase activity"/>
    <property type="evidence" value="ECO:0000318"/>
    <property type="project" value="GO_Central"/>
</dbReference>
<dbReference type="GO" id="GO:0006636">
    <property type="term" value="P:unsaturated fatty acid biosynthetic process"/>
    <property type="evidence" value="ECO:0007669"/>
    <property type="project" value="UniProtKB-UniPathway"/>
</dbReference>
<dbReference type="CDD" id="cd03507">
    <property type="entry name" value="Delta12-FADS-like"/>
    <property type="match status" value="1"/>
</dbReference>
<dbReference type="InterPro" id="IPR005804">
    <property type="entry name" value="FA_desaturase_dom"/>
</dbReference>
<dbReference type="InterPro" id="IPR012171">
    <property type="entry name" value="Fatty_acid_desaturase"/>
</dbReference>
<dbReference type="PANTHER" id="PTHR32100">
    <property type="entry name" value="OMEGA-6 FATTY ACID DESATURASE, CHLOROPLASTIC"/>
    <property type="match status" value="1"/>
</dbReference>
<dbReference type="Pfam" id="PF00487">
    <property type="entry name" value="FA_desaturase"/>
    <property type="match status" value="1"/>
</dbReference>
<sequence length="447" mass="51306">MESAITISNHVNLAFSLSRNPSLSTKNSAGISCIKWQRPCLRNLGHVRLNQQRKGTRRKSTLVQAVAVPVAQPSAFPPTDNTEHLKQLAERYGFQQIGEPLPDDVTMRDIITSLPKQVFEINDTKAWGTVLISVTSYALGIFMIAKAPWYLLPLAWAWTGTAITGFFVIGHDCAHKSFSKNKLVEDIVGTLAFMPLIYPYEPWRFKHDQHHTKTNMLREDTAWLPIMKEDIESSPGLRKALIYAYGPLRTWMSIAHWLKVHFNLKDFRQSEVKRATISLAAVFAFMVIGWPLIIYKTGIVGWIKFWLMPWLGYHFWMSTFTIVHHTAPHIPFKSSKEWNAAQAQLSGTVHCDYPRWIEILCHDISVHIPHHISPKIPSYNLRAANQSLNENWGEYLNKPKSNWRLMRTIMTTCHIYDKDGNYVSFEKAVPEESQPISIPKRVMPDYA</sequence>
<proteinExistence type="evidence at protein level"/>
<name>FAD6C_SPIOL</name>